<feature type="chain" id="PRO_0000129097" description="Flagellar biosynthetic protein FliQ">
    <location>
        <begin position="1"/>
        <end position="89"/>
    </location>
</feature>
<feature type="transmembrane region" description="Helical" evidence="2">
    <location>
        <begin position="18"/>
        <end position="38"/>
    </location>
</feature>
<feature type="transmembrane region" description="Helical" evidence="2">
    <location>
        <begin position="55"/>
        <end position="75"/>
    </location>
</feature>
<feature type="helix" evidence="4">
    <location>
        <begin position="3"/>
        <end position="37"/>
    </location>
</feature>
<feature type="strand" evidence="4">
    <location>
        <begin position="40"/>
        <end position="42"/>
    </location>
</feature>
<feature type="helix" evidence="4">
    <location>
        <begin position="51"/>
        <end position="65"/>
    </location>
</feature>
<feature type="helix" evidence="4">
    <location>
        <begin position="67"/>
        <end position="83"/>
    </location>
</feature>
<feature type="turn" evidence="4">
    <location>
        <begin position="84"/>
        <end position="86"/>
    </location>
</feature>
<reference key="1">
    <citation type="journal article" date="1997" name="J. Bacteriol.">
        <title>The FliO, FliP, FliQ, and FliR proteins of Salmonella typhimurium: putative components for flagellar assembly.</title>
        <authorList>
            <person name="Ohnishi K."/>
            <person name="Fan F."/>
            <person name="Schoenhals G.J."/>
            <person name="Kihara M."/>
            <person name="Macnab R.M."/>
        </authorList>
    </citation>
    <scope>NUCLEOTIDE SEQUENCE [GENOMIC DNA]</scope>
    <source>
        <strain>LT2</strain>
    </source>
</reference>
<reference key="2">
    <citation type="journal article" date="2001" name="Nature">
        <title>Complete genome sequence of Salmonella enterica serovar Typhimurium LT2.</title>
        <authorList>
            <person name="McClelland M."/>
            <person name="Sanderson K.E."/>
            <person name="Spieth J."/>
            <person name="Clifton S.W."/>
            <person name="Latreille P."/>
            <person name="Courtney L."/>
            <person name="Porwollik S."/>
            <person name="Ali J."/>
            <person name="Dante M."/>
            <person name="Du F."/>
            <person name="Hou S."/>
            <person name="Layman D."/>
            <person name="Leonard S."/>
            <person name="Nguyen C."/>
            <person name="Scott K."/>
            <person name="Holmes A."/>
            <person name="Grewal N."/>
            <person name="Mulvaney E."/>
            <person name="Ryan E."/>
            <person name="Sun H."/>
            <person name="Florea L."/>
            <person name="Miller W."/>
            <person name="Stoneking T."/>
            <person name="Nhan M."/>
            <person name="Waterston R."/>
            <person name="Wilson R.K."/>
        </authorList>
    </citation>
    <scope>NUCLEOTIDE SEQUENCE [LARGE SCALE GENOMIC DNA]</scope>
    <source>
        <strain>LT2 / SGSC1412 / ATCC 700720</strain>
    </source>
</reference>
<protein>
    <recommendedName>
        <fullName>Flagellar biosynthetic protein FliQ</fullName>
    </recommendedName>
</protein>
<gene>
    <name type="primary">fliQ</name>
    <name type="synonym">flaQ</name>
    <name type="ordered locus">STM1980</name>
</gene>
<name>FLIQ_SALTY</name>
<organism>
    <name type="scientific">Salmonella typhimurium (strain LT2 / SGSC1412 / ATCC 700720)</name>
    <dbReference type="NCBI Taxonomy" id="99287"/>
    <lineage>
        <taxon>Bacteria</taxon>
        <taxon>Pseudomonadati</taxon>
        <taxon>Pseudomonadota</taxon>
        <taxon>Gammaproteobacteria</taxon>
        <taxon>Enterobacterales</taxon>
        <taxon>Enterobacteriaceae</taxon>
        <taxon>Salmonella</taxon>
    </lineage>
</organism>
<proteinExistence type="evidence at protein level"/>
<accession>P0A1L5</accession>
<accession>P54701</accession>
<dbReference type="EMBL" id="L49021">
    <property type="protein sequence ID" value="AAB81320.1"/>
    <property type="molecule type" value="Genomic_DNA"/>
</dbReference>
<dbReference type="EMBL" id="AE006468">
    <property type="protein sequence ID" value="AAL20892.1"/>
    <property type="molecule type" value="Genomic_DNA"/>
</dbReference>
<dbReference type="PIR" id="S78699">
    <property type="entry name" value="S78699"/>
</dbReference>
<dbReference type="RefSeq" id="NP_460933.1">
    <property type="nucleotide sequence ID" value="NC_003197.2"/>
</dbReference>
<dbReference type="RefSeq" id="WP_000187355.1">
    <property type="nucleotide sequence ID" value="NC_003197.2"/>
</dbReference>
<dbReference type="PDB" id="7BIN">
    <property type="method" value="EM"/>
    <property type="resolution" value="3.20 A"/>
    <property type="chains" value="G/H/I/J=1-89"/>
</dbReference>
<dbReference type="PDB" id="7CGO">
    <property type="method" value="EM"/>
    <property type="resolution" value="3.90 A"/>
    <property type="chains" value="CA/CB/CC/CD=1-89"/>
</dbReference>
<dbReference type="PDB" id="7E80">
    <property type="method" value="EM"/>
    <property type="resolution" value="3.67 A"/>
    <property type="chains" value="CA/CB/CC/CD=1-89"/>
</dbReference>
<dbReference type="PDB" id="8WK3">
    <property type="method" value="EM"/>
    <property type="resolution" value="3.30 A"/>
    <property type="chains" value="A/B/C/D=1-89"/>
</dbReference>
<dbReference type="PDB" id="8WKK">
    <property type="method" value="EM"/>
    <property type="resolution" value="3.30 A"/>
    <property type="chains" value="A/B/C/D=1-89"/>
</dbReference>
<dbReference type="PDB" id="8WKQ">
    <property type="method" value="EM"/>
    <property type="resolution" value="3.80 A"/>
    <property type="chains" value="A/B/C/D=1-89"/>
</dbReference>
<dbReference type="PDB" id="8WL2">
    <property type="method" value="EM"/>
    <property type="resolution" value="3.40 A"/>
    <property type="chains" value="Ab/Aq/Ar/As=1-89"/>
</dbReference>
<dbReference type="PDB" id="8WLH">
    <property type="method" value="EM"/>
    <property type="resolution" value="3.70 A"/>
    <property type="chains" value="A/B/C/D=1-89"/>
</dbReference>
<dbReference type="PDB" id="8WLN">
    <property type="method" value="EM"/>
    <property type="resolution" value="4.30 A"/>
    <property type="chains" value="A/B/C/D=1-89"/>
</dbReference>
<dbReference type="PDB" id="8WLQ">
    <property type="method" value="EM"/>
    <property type="resolution" value="3.80 A"/>
    <property type="chains" value="A/B/C/D=1-89"/>
</dbReference>
<dbReference type="PDB" id="8WLT">
    <property type="method" value="EM"/>
    <property type="resolution" value="4.10 A"/>
    <property type="chains" value="Ab/Aq/Ar/As=1-89"/>
</dbReference>
<dbReference type="PDB" id="8WO5">
    <property type="method" value="EM"/>
    <property type="resolution" value="7.40 A"/>
    <property type="chains" value="Ab/Aq/Ar/As=1-89"/>
</dbReference>
<dbReference type="PDB" id="8WOE">
    <property type="method" value="EM"/>
    <property type="resolution" value="4.30 A"/>
    <property type="chains" value="Ab/Aq/Ar/As=1-89"/>
</dbReference>
<dbReference type="PDBsum" id="7BIN"/>
<dbReference type="PDBsum" id="7CGO"/>
<dbReference type="PDBsum" id="7E80"/>
<dbReference type="PDBsum" id="8WK3"/>
<dbReference type="PDBsum" id="8WKK"/>
<dbReference type="PDBsum" id="8WKQ"/>
<dbReference type="PDBsum" id="8WL2"/>
<dbReference type="PDBsum" id="8WLH"/>
<dbReference type="PDBsum" id="8WLN"/>
<dbReference type="PDBsum" id="8WLQ"/>
<dbReference type="PDBsum" id="8WLT"/>
<dbReference type="PDBsum" id="8WO5"/>
<dbReference type="PDBsum" id="8WOE"/>
<dbReference type="EMDB" id="EMD-30359"/>
<dbReference type="EMDB" id="EMD-31006"/>
<dbReference type="EMDB" id="EMD-37594"/>
<dbReference type="EMDB" id="EMD-37601"/>
<dbReference type="EMDB" id="EMD-37605"/>
<dbReference type="EMDB" id="EMD-37611"/>
<dbReference type="EMDB" id="EMD-37619"/>
<dbReference type="EMDB" id="EMD-37625"/>
<dbReference type="EMDB" id="EMD-37628"/>
<dbReference type="EMDB" id="EMD-37630"/>
<dbReference type="EMDB" id="EMD-37679"/>
<dbReference type="EMDB" id="EMD-37684"/>
<dbReference type="SMR" id="P0A1L5"/>
<dbReference type="STRING" id="99287.STM1980"/>
<dbReference type="TCDB" id="3.A.6.2.1">
    <property type="family name" value="the type iii (virulence-related) secretory pathway (iiisp) family"/>
</dbReference>
<dbReference type="PaxDb" id="99287-STM1980"/>
<dbReference type="GeneID" id="1253501"/>
<dbReference type="GeneID" id="44980821"/>
<dbReference type="KEGG" id="stm:STM1980"/>
<dbReference type="PATRIC" id="fig|99287.12.peg.2097"/>
<dbReference type="HOGENOM" id="CLU_164516_2_0_6"/>
<dbReference type="OMA" id="EFTRYLW"/>
<dbReference type="PhylomeDB" id="P0A1L5"/>
<dbReference type="BioCyc" id="SENT99287:STM1980-MONOMER"/>
<dbReference type="Proteomes" id="UP000001014">
    <property type="component" value="Chromosome"/>
</dbReference>
<dbReference type="GO" id="GO:0009425">
    <property type="term" value="C:bacterial-type flagellum basal body"/>
    <property type="evidence" value="ECO:0007669"/>
    <property type="project" value="UniProtKB-SubCell"/>
</dbReference>
<dbReference type="GO" id="GO:0005886">
    <property type="term" value="C:plasma membrane"/>
    <property type="evidence" value="ECO:0007669"/>
    <property type="project" value="UniProtKB-SubCell"/>
</dbReference>
<dbReference type="GO" id="GO:0044780">
    <property type="term" value="P:bacterial-type flagellum assembly"/>
    <property type="evidence" value="ECO:0000318"/>
    <property type="project" value="GO_Central"/>
</dbReference>
<dbReference type="GO" id="GO:0009306">
    <property type="term" value="P:protein secretion"/>
    <property type="evidence" value="ECO:0007669"/>
    <property type="project" value="InterPro"/>
</dbReference>
<dbReference type="InterPro" id="IPR002191">
    <property type="entry name" value="Bac_export_3"/>
</dbReference>
<dbReference type="InterPro" id="IPR006305">
    <property type="entry name" value="FliQ"/>
</dbReference>
<dbReference type="NCBIfam" id="TIGR01402">
    <property type="entry name" value="fliQ"/>
    <property type="match status" value="1"/>
</dbReference>
<dbReference type="PANTHER" id="PTHR34040">
    <property type="entry name" value="FLAGELLAR BIOSYNTHETIC PROTEIN FLIQ"/>
    <property type="match status" value="1"/>
</dbReference>
<dbReference type="PANTHER" id="PTHR34040:SF2">
    <property type="entry name" value="FLAGELLAR BIOSYNTHETIC PROTEIN FLIQ"/>
    <property type="match status" value="1"/>
</dbReference>
<dbReference type="Pfam" id="PF01313">
    <property type="entry name" value="Bac_export_3"/>
    <property type="match status" value="1"/>
</dbReference>
<dbReference type="PIRSF" id="PIRSF004669">
    <property type="entry name" value="FliQ"/>
    <property type="match status" value="1"/>
</dbReference>
<dbReference type="PRINTS" id="PR00952">
    <property type="entry name" value="TYPE3IMQPROT"/>
</dbReference>
<evidence type="ECO:0000250" key="1"/>
<evidence type="ECO:0000255" key="2"/>
<evidence type="ECO:0000305" key="3"/>
<evidence type="ECO:0007829" key="4">
    <source>
        <dbReference type="PDB" id="7BIN"/>
    </source>
</evidence>
<comment type="function">
    <text evidence="1">Required for the assembly of the rivet at the earliest stage of flagellar biosynthesis.</text>
</comment>
<comment type="subcellular location">
    <subcellularLocation>
        <location evidence="3">Cell inner membrane</location>
        <topology evidence="3">Multi-pass membrane protein</topology>
    </subcellularLocation>
    <subcellularLocation>
        <location evidence="1">Bacterial flagellum basal body</location>
    </subcellularLocation>
</comment>
<comment type="similarity">
    <text evidence="3">Belongs to the FliQ/MopD/SpaQ family.</text>
</comment>
<sequence length="89" mass="9604">MTPESVMMMGTEAMKVALALAAPLLLVALITGLIISILQAATQINEMTLSFIPKIVAVFIAIIVAGPWMLNLLLDYVRTLFSNLPYIIG</sequence>
<keyword id="KW-0002">3D-structure</keyword>
<keyword id="KW-0975">Bacterial flagellum</keyword>
<keyword id="KW-0997">Cell inner membrane</keyword>
<keyword id="KW-1003">Cell membrane</keyword>
<keyword id="KW-0472">Membrane</keyword>
<keyword id="KW-1185">Reference proteome</keyword>
<keyword id="KW-0812">Transmembrane</keyword>
<keyword id="KW-1133">Transmembrane helix</keyword>